<feature type="chain" id="PRO_1000147091" description="Tagatose-6-phosphate kinase">
    <location>
        <begin position="1"/>
        <end position="309"/>
    </location>
</feature>
<organism>
    <name type="scientific">Streptococcus pneumoniae (strain CGSP14)</name>
    <dbReference type="NCBI Taxonomy" id="516950"/>
    <lineage>
        <taxon>Bacteria</taxon>
        <taxon>Bacillati</taxon>
        <taxon>Bacillota</taxon>
        <taxon>Bacilli</taxon>
        <taxon>Lactobacillales</taxon>
        <taxon>Streptococcaceae</taxon>
        <taxon>Streptococcus</taxon>
    </lineage>
</organism>
<comment type="catalytic activity">
    <reaction evidence="1">
        <text>D-tagatofuranose 6-phosphate + ATP = D-tagatofuranose 1,6-bisphosphate + ADP + H(+)</text>
        <dbReference type="Rhea" id="RHEA:12420"/>
        <dbReference type="ChEBI" id="CHEBI:15378"/>
        <dbReference type="ChEBI" id="CHEBI:30616"/>
        <dbReference type="ChEBI" id="CHEBI:58694"/>
        <dbReference type="ChEBI" id="CHEBI:58695"/>
        <dbReference type="ChEBI" id="CHEBI:456216"/>
        <dbReference type="EC" id="2.7.1.144"/>
    </reaction>
</comment>
<comment type="pathway">
    <text evidence="1">Carbohydrate metabolism; D-tagatose 6-phosphate degradation; D-glyceraldehyde 3-phosphate and glycerone phosphate from D-tagatose 6-phosphate: step 1/2.</text>
</comment>
<comment type="similarity">
    <text evidence="1">Belongs to the carbohydrate kinase PfkB family. LacC subfamily.</text>
</comment>
<proteinExistence type="inferred from homology"/>
<reference key="1">
    <citation type="journal article" date="2009" name="BMC Genomics">
        <title>Genome evolution driven by host adaptations results in a more virulent and antimicrobial-resistant Streptococcus pneumoniae serotype 14.</title>
        <authorList>
            <person name="Ding F."/>
            <person name="Tang P."/>
            <person name="Hsu M.-H."/>
            <person name="Cui P."/>
            <person name="Hu S."/>
            <person name="Yu J."/>
            <person name="Chiu C.-H."/>
        </authorList>
    </citation>
    <scope>NUCLEOTIDE SEQUENCE [LARGE SCALE GENOMIC DNA]</scope>
    <source>
        <strain>CGSP14</strain>
    </source>
</reference>
<gene>
    <name evidence="1" type="primary">lacC</name>
    <name type="ordered locus">SPCG_1107</name>
</gene>
<accession>B2IPT7</accession>
<sequence length="309" mass="33386">MILTVTMNPSIDISYPLDELKIDTVNRVVDVTKTAGGKGLNVTRVLSEFGDSVLATGLVGGKLGEFLVEHIDNQVKKDFFSIQGETRNCIAILHGDNQTEVLEKGPEVLEQEGQDFLEHFKKLLESVEVVAISGSLPAGLPVDYYASLVELANQAGKPVVLDCSGAALQAVLESPHKPTVIKPNNEELSQLLGREVSEDLDELKEVLQEPLFAGIEWIIVSLGANGTFAKHGDTFYKVDIPRIQVVNPVGSGDSTVAGISSGLLHKESDAELLIKANVLGMLNAQEKMTGHVNMANYQALYDQLIVKEV</sequence>
<name>LACC_STRPS</name>
<keyword id="KW-0067">ATP-binding</keyword>
<keyword id="KW-0418">Kinase</keyword>
<keyword id="KW-0423">Lactose metabolism</keyword>
<keyword id="KW-0547">Nucleotide-binding</keyword>
<keyword id="KW-0808">Transferase</keyword>
<evidence type="ECO:0000255" key="1">
    <source>
        <dbReference type="HAMAP-Rule" id="MF_01557"/>
    </source>
</evidence>
<protein>
    <recommendedName>
        <fullName evidence="1">Tagatose-6-phosphate kinase</fullName>
        <ecNumber evidence="1">2.7.1.144</ecNumber>
    </recommendedName>
    <alternativeName>
        <fullName evidence="1">Phosphotagatokinase</fullName>
    </alternativeName>
</protein>
<dbReference type="EC" id="2.7.1.144" evidence="1"/>
<dbReference type="EMBL" id="CP001033">
    <property type="protein sequence ID" value="ACB90359.1"/>
    <property type="molecule type" value="Genomic_DNA"/>
</dbReference>
<dbReference type="RefSeq" id="WP_000604272.1">
    <property type="nucleotide sequence ID" value="NC_010582.1"/>
</dbReference>
<dbReference type="SMR" id="B2IPT7"/>
<dbReference type="KEGG" id="spw:SPCG_1107"/>
<dbReference type="HOGENOM" id="CLU_050013_5_0_9"/>
<dbReference type="UniPathway" id="UPA00704">
    <property type="reaction ID" value="UER00715"/>
</dbReference>
<dbReference type="GO" id="GO:0005829">
    <property type="term" value="C:cytosol"/>
    <property type="evidence" value="ECO:0007669"/>
    <property type="project" value="TreeGrafter"/>
</dbReference>
<dbReference type="GO" id="GO:0005524">
    <property type="term" value="F:ATP binding"/>
    <property type="evidence" value="ECO:0007669"/>
    <property type="project" value="UniProtKB-KW"/>
</dbReference>
<dbReference type="GO" id="GO:0008443">
    <property type="term" value="F:phosphofructokinase activity"/>
    <property type="evidence" value="ECO:0007669"/>
    <property type="project" value="TreeGrafter"/>
</dbReference>
<dbReference type="GO" id="GO:0009024">
    <property type="term" value="F:tagatose-6-phosphate kinase activity"/>
    <property type="evidence" value="ECO:0007669"/>
    <property type="project" value="UniProtKB-UniRule"/>
</dbReference>
<dbReference type="GO" id="GO:2001059">
    <property type="term" value="P:D-tagatose 6-phosphate catabolic process"/>
    <property type="evidence" value="ECO:0007669"/>
    <property type="project" value="UniProtKB-UniRule"/>
</dbReference>
<dbReference type="GO" id="GO:0019512">
    <property type="term" value="P:lactose catabolic process via tagatose-6-phosphate"/>
    <property type="evidence" value="ECO:0007669"/>
    <property type="project" value="InterPro"/>
</dbReference>
<dbReference type="CDD" id="cd01164">
    <property type="entry name" value="FruK_PfkB_like"/>
    <property type="match status" value="1"/>
</dbReference>
<dbReference type="FunFam" id="3.40.1190.20:FF:000001">
    <property type="entry name" value="Phosphofructokinase"/>
    <property type="match status" value="1"/>
</dbReference>
<dbReference type="Gene3D" id="3.40.1190.20">
    <property type="match status" value="1"/>
</dbReference>
<dbReference type="HAMAP" id="MF_01557">
    <property type="entry name" value="LacC"/>
    <property type="match status" value="1"/>
</dbReference>
<dbReference type="InterPro" id="IPR002173">
    <property type="entry name" value="Carboh/pur_kinase_PfkB_CS"/>
</dbReference>
<dbReference type="InterPro" id="IPR005926">
    <property type="entry name" value="LacC"/>
</dbReference>
<dbReference type="InterPro" id="IPR011611">
    <property type="entry name" value="PfkB_dom"/>
</dbReference>
<dbReference type="InterPro" id="IPR029056">
    <property type="entry name" value="Ribokinase-like"/>
</dbReference>
<dbReference type="InterPro" id="IPR017583">
    <property type="entry name" value="Tagatose/fructose_Pkinase"/>
</dbReference>
<dbReference type="NCBIfam" id="TIGR03168">
    <property type="entry name" value="1-PFK"/>
    <property type="match status" value="1"/>
</dbReference>
<dbReference type="NCBIfam" id="TIGR01231">
    <property type="entry name" value="lacC"/>
    <property type="match status" value="1"/>
</dbReference>
<dbReference type="NCBIfam" id="NF010033">
    <property type="entry name" value="PRK13508.1"/>
    <property type="match status" value="1"/>
</dbReference>
<dbReference type="PANTHER" id="PTHR46566:SF5">
    <property type="entry name" value="1-PHOSPHOFRUCTOKINASE"/>
    <property type="match status" value="1"/>
</dbReference>
<dbReference type="PANTHER" id="PTHR46566">
    <property type="entry name" value="1-PHOSPHOFRUCTOKINASE-RELATED"/>
    <property type="match status" value="1"/>
</dbReference>
<dbReference type="Pfam" id="PF00294">
    <property type="entry name" value="PfkB"/>
    <property type="match status" value="1"/>
</dbReference>
<dbReference type="PIRSF" id="PIRSF000535">
    <property type="entry name" value="1PFK/6PFK/LacC"/>
    <property type="match status" value="1"/>
</dbReference>
<dbReference type="SUPFAM" id="SSF53613">
    <property type="entry name" value="Ribokinase-like"/>
    <property type="match status" value="1"/>
</dbReference>
<dbReference type="PROSITE" id="PS00583">
    <property type="entry name" value="PFKB_KINASES_1"/>
    <property type="match status" value="1"/>
</dbReference>
<dbReference type="PROSITE" id="PS00584">
    <property type="entry name" value="PFKB_KINASES_2"/>
    <property type="match status" value="1"/>
</dbReference>